<protein>
    <recommendedName>
        <fullName>Fetal and adult testis-expressed transcript protein</fullName>
    </recommendedName>
    <alternativeName>
        <fullName>Cancer/testis antigen 43</fullName>
        <shortName>CT43</shortName>
    </alternativeName>
    <alternativeName>
        <fullName>Tumor antigen BJ-HCC-2</fullName>
    </alternativeName>
</protein>
<sequence length="183" mass="20712">MAGGPPNTKAEMEMSLAEELNHGRQGENQEHLVIAEMMELGSRSRGASQKKQKLEQKAAGSASAKRVWNMTATRPKKMGSQLPKPRMLRESGHGDAHLQEYAGNFQGIRFHYDRNPGTDAVAQTSLEEFNVLEMEVMRRQLYAVNRRLRALEEQGATWRHRETLIIAVLVSASIANLWLWMNQ</sequence>
<dbReference type="EMBL" id="AF249872">
    <property type="protein sequence ID" value="AAK69024.1"/>
    <property type="molecule type" value="mRNA"/>
</dbReference>
<dbReference type="EMBL" id="AY101182">
    <property type="protein sequence ID" value="AAM48744.1"/>
    <property type="molecule type" value="mRNA"/>
</dbReference>
<dbReference type="EMBL" id="AK057369">
    <property type="protein sequence ID" value="BAB71454.1"/>
    <property type="molecule type" value="mRNA"/>
</dbReference>
<dbReference type="EMBL" id="BC022064">
    <property type="protein sequence ID" value="AAH22064.1"/>
    <property type="molecule type" value="mRNA"/>
</dbReference>
<dbReference type="CCDS" id="CCDS14700.1"/>
<dbReference type="RefSeq" id="NP_149076.1">
    <property type="nucleotide sequence ID" value="NM_033085.3"/>
</dbReference>
<dbReference type="SMR" id="Q969F0"/>
<dbReference type="BioGRID" id="124636">
    <property type="interactions" value="112"/>
</dbReference>
<dbReference type="FunCoup" id="Q969F0">
    <property type="interactions" value="39"/>
</dbReference>
<dbReference type="IntAct" id="Q969F0">
    <property type="interactions" value="100"/>
</dbReference>
<dbReference type="MINT" id="Q969F0"/>
<dbReference type="STRING" id="9606.ENSP00000359375"/>
<dbReference type="BioMuta" id="FATE1"/>
<dbReference type="DMDM" id="37078481"/>
<dbReference type="MassIVE" id="Q969F0"/>
<dbReference type="PaxDb" id="9606-ENSP00000359375"/>
<dbReference type="PeptideAtlas" id="Q969F0"/>
<dbReference type="ProteomicsDB" id="75746"/>
<dbReference type="Antibodypedia" id="30697">
    <property type="antibodies" value="315 antibodies from 21 providers"/>
</dbReference>
<dbReference type="DNASU" id="89885"/>
<dbReference type="Ensembl" id="ENST00000370350.7">
    <property type="protein sequence ID" value="ENSP00000359375.3"/>
    <property type="gene ID" value="ENSG00000147378.11"/>
</dbReference>
<dbReference type="GeneID" id="89885"/>
<dbReference type="KEGG" id="hsa:89885"/>
<dbReference type="MANE-Select" id="ENST00000370350.7">
    <property type="protein sequence ID" value="ENSP00000359375.3"/>
    <property type="RefSeq nucleotide sequence ID" value="NM_033085.3"/>
    <property type="RefSeq protein sequence ID" value="NP_149076.1"/>
</dbReference>
<dbReference type="UCSC" id="uc004fex.4">
    <property type="organism name" value="human"/>
</dbReference>
<dbReference type="AGR" id="HGNC:24683"/>
<dbReference type="CTD" id="89885"/>
<dbReference type="DisGeNET" id="89885"/>
<dbReference type="GeneCards" id="FATE1"/>
<dbReference type="HGNC" id="HGNC:24683">
    <property type="gene designation" value="FATE1"/>
</dbReference>
<dbReference type="HPA" id="ENSG00000147378">
    <property type="expression patterns" value="Tissue enriched (testis)"/>
</dbReference>
<dbReference type="MIM" id="300450">
    <property type="type" value="gene"/>
</dbReference>
<dbReference type="neXtProt" id="NX_Q969F0"/>
<dbReference type="OpenTargets" id="ENSG00000147378"/>
<dbReference type="PharmGKB" id="PA134875203"/>
<dbReference type="VEuPathDB" id="HostDB:ENSG00000147378"/>
<dbReference type="eggNOG" id="ENOG502SRT6">
    <property type="taxonomic scope" value="Eukaryota"/>
</dbReference>
<dbReference type="GeneTree" id="ENSGT00390000006832"/>
<dbReference type="HOGENOM" id="CLU_129363_0_0_1"/>
<dbReference type="InParanoid" id="Q969F0"/>
<dbReference type="OMA" id="MEHGSQS"/>
<dbReference type="OrthoDB" id="5986838at2759"/>
<dbReference type="PAN-GO" id="Q969F0">
    <property type="GO annotations" value="6 GO annotations based on evolutionary models"/>
</dbReference>
<dbReference type="PhylomeDB" id="Q969F0"/>
<dbReference type="TreeFam" id="TF338514"/>
<dbReference type="PathwayCommons" id="Q969F0"/>
<dbReference type="SignaLink" id="Q969F0"/>
<dbReference type="BioGRID-ORCS" id="89885">
    <property type="hits" value="9 hits in 771 CRISPR screens"/>
</dbReference>
<dbReference type="ChiTaRS" id="FATE1">
    <property type="organism name" value="human"/>
</dbReference>
<dbReference type="GeneWiki" id="FATE1"/>
<dbReference type="GenomeRNAi" id="89885"/>
<dbReference type="Pharos" id="Q969F0">
    <property type="development level" value="Tbio"/>
</dbReference>
<dbReference type="PRO" id="PR:Q969F0"/>
<dbReference type="Proteomes" id="UP000005640">
    <property type="component" value="Chromosome X"/>
</dbReference>
<dbReference type="RNAct" id="Q969F0">
    <property type="molecule type" value="protein"/>
</dbReference>
<dbReference type="Bgee" id="ENSG00000147378">
    <property type="expression patterns" value="Expressed in right testis and 105 other cell types or tissues"/>
</dbReference>
<dbReference type="ExpressionAtlas" id="Q969F0">
    <property type="expression patterns" value="baseline and differential"/>
</dbReference>
<dbReference type="GO" id="GO:0005783">
    <property type="term" value="C:endoplasmic reticulum"/>
    <property type="evidence" value="ECO:0000314"/>
    <property type="project" value="LIFEdb"/>
</dbReference>
<dbReference type="GO" id="GO:0005789">
    <property type="term" value="C:endoplasmic reticulum membrane"/>
    <property type="evidence" value="ECO:0007669"/>
    <property type="project" value="UniProtKB-SubCell"/>
</dbReference>
<dbReference type="GO" id="GO:0044233">
    <property type="term" value="C:mitochondria-associated endoplasmic reticulum membrane contact site"/>
    <property type="evidence" value="ECO:0000314"/>
    <property type="project" value="UniProtKB"/>
</dbReference>
<dbReference type="GO" id="GO:0005741">
    <property type="term" value="C:mitochondrial outer membrane"/>
    <property type="evidence" value="ECO:0000314"/>
    <property type="project" value="UniProtKB"/>
</dbReference>
<dbReference type="GO" id="GO:0042802">
    <property type="term" value="F:identical protein binding"/>
    <property type="evidence" value="ECO:0000353"/>
    <property type="project" value="IntAct"/>
</dbReference>
<dbReference type="GO" id="GO:0031625">
    <property type="term" value="F:ubiquitin protein ligase binding"/>
    <property type="evidence" value="ECO:0000314"/>
    <property type="project" value="UniProtKB"/>
</dbReference>
<dbReference type="GO" id="GO:0006915">
    <property type="term" value="P:apoptotic process"/>
    <property type="evidence" value="ECO:0007669"/>
    <property type="project" value="UniProtKB-KW"/>
</dbReference>
<dbReference type="GO" id="GO:0043066">
    <property type="term" value="P:negative regulation of apoptotic process"/>
    <property type="evidence" value="ECO:0000314"/>
    <property type="project" value="UniProtKB"/>
</dbReference>
<dbReference type="GO" id="GO:0051562">
    <property type="term" value="P:negative regulation of mitochondrial calcium ion concentration"/>
    <property type="evidence" value="ECO:0000314"/>
    <property type="project" value="UniProtKB"/>
</dbReference>
<dbReference type="InterPro" id="IPR039153">
    <property type="entry name" value="FATE1"/>
</dbReference>
<dbReference type="InterPro" id="IPR039433">
    <property type="entry name" value="Mff-like_dom"/>
</dbReference>
<dbReference type="PANTHER" id="PTHR21128">
    <property type="entry name" value="FETAL AND ADULT TESTIS-EXPRESSED TRANSCRIPT PROTEIN"/>
    <property type="match status" value="1"/>
</dbReference>
<dbReference type="PANTHER" id="PTHR21128:SF0">
    <property type="entry name" value="FETAL AND ADULT TESTIS-EXPRESSED TRANSCRIPT PROTEIN"/>
    <property type="match status" value="1"/>
</dbReference>
<dbReference type="Pfam" id="PF05644">
    <property type="entry name" value="Miff"/>
    <property type="match status" value="1"/>
</dbReference>
<keyword id="KW-0053">Apoptosis</keyword>
<keyword id="KW-0256">Endoplasmic reticulum</keyword>
<keyword id="KW-0472">Membrane</keyword>
<keyword id="KW-0496">Mitochondrion</keyword>
<keyword id="KW-1000">Mitochondrion outer membrane</keyword>
<keyword id="KW-1267">Proteomics identification</keyword>
<keyword id="KW-1185">Reference proteome</keyword>
<keyword id="KW-0812">Transmembrane</keyword>
<keyword id="KW-1133">Transmembrane helix</keyword>
<feature type="chain" id="PRO_0000087200" description="Fetal and adult testis-expressed transcript protein">
    <location>
        <begin position="1"/>
        <end position="183"/>
    </location>
</feature>
<feature type="transmembrane region" description="Helical" evidence="1">
    <location>
        <begin position="163"/>
        <end position="181"/>
    </location>
</feature>
<feature type="region of interest" description="Disordered" evidence="2">
    <location>
        <begin position="42"/>
        <end position="66"/>
    </location>
</feature>
<feature type="sequence variant" id="VAR_016917" description="16% of the population; infertile and fertile individuals; dbSNP:rs3810715." evidence="4">
    <original>A</original>
    <variation>V</variation>
    <location>
        <position position="10"/>
    </location>
</feature>
<feature type="sequence variant" id="VAR_016918" description="In fertile and infertile individuals." evidence="4">
    <original>I</original>
    <variation>T</variation>
    <location>
        <position position="34"/>
    </location>
</feature>
<feature type="sequence variant" id="VAR_016919" description="In fertile and infertile individuals; dbSNP:rs141497002." evidence="4">
    <original>S</original>
    <variation>R</variation>
    <location>
        <position position="125"/>
    </location>
</feature>
<feature type="mutagenesis site" description="Impairs association with mitochondria." evidence="7">
    <original>L</original>
    <variation>D</variation>
    <location>
        <position position="151"/>
    </location>
</feature>
<proteinExistence type="evidence at protein level"/>
<reference key="1">
    <citation type="journal article" date="2001" name="Mol. Cell. Endocrinol.">
        <title>Human FATE is a novel X-linked gene expressed in fetal and adult testis.</title>
        <authorList>
            <person name="Olesen C."/>
            <person name="Larsen N.J."/>
            <person name="Byskov A.G."/>
            <person name="Harboe T.L."/>
            <person name="Tommerup N."/>
        </authorList>
    </citation>
    <scope>NUCLEOTIDE SEQUENCE [MRNA]</scope>
    <scope>TISSUE SPECIFICITY</scope>
    <source>
        <tissue>Testis</tissue>
    </source>
</reference>
<reference key="2">
    <citation type="journal article" date="2003" name="Br. J. Cancer">
        <title>Identification of two novel CT antigens and their capacity to elicit antibody response in hepatocellular carcinoma patients.</title>
        <authorList>
            <person name="Dong X.Y."/>
            <person name="Su Y.R."/>
            <person name="Qian X.P."/>
            <person name="Yang X.A."/>
            <person name="Pang X.W."/>
            <person name="Wu H.Y."/>
            <person name="Chen W.F."/>
        </authorList>
    </citation>
    <scope>NUCLEOTIDE SEQUENCE [MRNA]</scope>
    <scope>TISSUE SPECIFICITY</scope>
</reference>
<reference key="3">
    <citation type="journal article" date="2004" name="Nat. Genet.">
        <title>Complete sequencing and characterization of 21,243 full-length human cDNAs.</title>
        <authorList>
            <person name="Ota T."/>
            <person name="Suzuki Y."/>
            <person name="Nishikawa T."/>
            <person name="Otsuki T."/>
            <person name="Sugiyama T."/>
            <person name="Irie R."/>
            <person name="Wakamatsu A."/>
            <person name="Hayashi K."/>
            <person name="Sato H."/>
            <person name="Nagai K."/>
            <person name="Kimura K."/>
            <person name="Makita H."/>
            <person name="Sekine M."/>
            <person name="Obayashi M."/>
            <person name="Nishi T."/>
            <person name="Shibahara T."/>
            <person name="Tanaka T."/>
            <person name="Ishii S."/>
            <person name="Yamamoto J."/>
            <person name="Saito K."/>
            <person name="Kawai Y."/>
            <person name="Isono Y."/>
            <person name="Nakamura Y."/>
            <person name="Nagahari K."/>
            <person name="Murakami K."/>
            <person name="Yasuda T."/>
            <person name="Iwayanagi T."/>
            <person name="Wagatsuma M."/>
            <person name="Shiratori A."/>
            <person name="Sudo H."/>
            <person name="Hosoiri T."/>
            <person name="Kaku Y."/>
            <person name="Kodaira H."/>
            <person name="Kondo H."/>
            <person name="Sugawara M."/>
            <person name="Takahashi M."/>
            <person name="Kanda K."/>
            <person name="Yokoi T."/>
            <person name="Furuya T."/>
            <person name="Kikkawa E."/>
            <person name="Omura Y."/>
            <person name="Abe K."/>
            <person name="Kamihara K."/>
            <person name="Katsuta N."/>
            <person name="Sato K."/>
            <person name="Tanikawa M."/>
            <person name="Yamazaki M."/>
            <person name="Ninomiya K."/>
            <person name="Ishibashi T."/>
            <person name="Yamashita H."/>
            <person name="Murakawa K."/>
            <person name="Fujimori K."/>
            <person name="Tanai H."/>
            <person name="Kimata M."/>
            <person name="Watanabe M."/>
            <person name="Hiraoka S."/>
            <person name="Chiba Y."/>
            <person name="Ishida S."/>
            <person name="Ono Y."/>
            <person name="Takiguchi S."/>
            <person name="Watanabe S."/>
            <person name="Yosida M."/>
            <person name="Hotuta T."/>
            <person name="Kusano J."/>
            <person name="Kanehori K."/>
            <person name="Takahashi-Fujii A."/>
            <person name="Hara H."/>
            <person name="Tanase T.-O."/>
            <person name="Nomura Y."/>
            <person name="Togiya S."/>
            <person name="Komai F."/>
            <person name="Hara R."/>
            <person name="Takeuchi K."/>
            <person name="Arita M."/>
            <person name="Imose N."/>
            <person name="Musashino K."/>
            <person name="Yuuki H."/>
            <person name="Oshima A."/>
            <person name="Sasaki N."/>
            <person name="Aotsuka S."/>
            <person name="Yoshikawa Y."/>
            <person name="Matsunawa H."/>
            <person name="Ichihara T."/>
            <person name="Shiohata N."/>
            <person name="Sano S."/>
            <person name="Moriya S."/>
            <person name="Momiyama H."/>
            <person name="Satoh N."/>
            <person name="Takami S."/>
            <person name="Terashima Y."/>
            <person name="Suzuki O."/>
            <person name="Nakagawa S."/>
            <person name="Senoh A."/>
            <person name="Mizoguchi H."/>
            <person name="Goto Y."/>
            <person name="Shimizu F."/>
            <person name="Wakebe H."/>
            <person name="Hishigaki H."/>
            <person name="Watanabe T."/>
            <person name="Sugiyama A."/>
            <person name="Takemoto M."/>
            <person name="Kawakami B."/>
            <person name="Yamazaki M."/>
            <person name="Watanabe K."/>
            <person name="Kumagai A."/>
            <person name="Itakura S."/>
            <person name="Fukuzumi Y."/>
            <person name="Fujimori Y."/>
            <person name="Komiyama M."/>
            <person name="Tashiro H."/>
            <person name="Tanigami A."/>
            <person name="Fujiwara T."/>
            <person name="Ono T."/>
            <person name="Yamada K."/>
            <person name="Fujii Y."/>
            <person name="Ozaki K."/>
            <person name="Hirao M."/>
            <person name="Ohmori Y."/>
            <person name="Kawabata A."/>
            <person name="Hikiji T."/>
            <person name="Kobatake N."/>
            <person name="Inagaki H."/>
            <person name="Ikema Y."/>
            <person name="Okamoto S."/>
            <person name="Okitani R."/>
            <person name="Kawakami T."/>
            <person name="Noguchi S."/>
            <person name="Itoh T."/>
            <person name="Shigeta K."/>
            <person name="Senba T."/>
            <person name="Matsumura K."/>
            <person name="Nakajima Y."/>
            <person name="Mizuno T."/>
            <person name="Morinaga M."/>
            <person name="Sasaki M."/>
            <person name="Togashi T."/>
            <person name="Oyama M."/>
            <person name="Hata H."/>
            <person name="Watanabe M."/>
            <person name="Komatsu T."/>
            <person name="Mizushima-Sugano J."/>
            <person name="Satoh T."/>
            <person name="Shirai Y."/>
            <person name="Takahashi Y."/>
            <person name="Nakagawa K."/>
            <person name="Okumura K."/>
            <person name="Nagase T."/>
            <person name="Nomura N."/>
            <person name="Kikuchi H."/>
            <person name="Masuho Y."/>
            <person name="Yamashita R."/>
            <person name="Nakai K."/>
            <person name="Yada T."/>
            <person name="Nakamura Y."/>
            <person name="Ohara O."/>
            <person name="Isogai T."/>
            <person name="Sugano S."/>
        </authorList>
    </citation>
    <scope>NUCLEOTIDE SEQUENCE [LARGE SCALE MRNA]</scope>
    <source>
        <tissue>Testis</tissue>
    </source>
</reference>
<reference key="4">
    <citation type="journal article" date="2004" name="Genome Res.">
        <title>The status, quality, and expansion of the NIH full-length cDNA project: the Mammalian Gene Collection (MGC).</title>
        <authorList>
            <consortium name="The MGC Project Team"/>
        </authorList>
    </citation>
    <scope>NUCLEOTIDE SEQUENCE [LARGE SCALE MRNA]</scope>
    <source>
        <tissue>Testis</tissue>
    </source>
</reference>
<reference key="5">
    <citation type="journal article" date="2015" name="Nat. Commun.">
        <title>Comprehensive functional characterization of cancer-testis antigens defines obligate participation in multiple hallmarks of cancer.</title>
        <authorList>
            <person name="Maxfield K.E."/>
            <person name="Taus P.J."/>
            <person name="Corcoran K."/>
            <person name="Wooten J."/>
            <person name="Macion J."/>
            <person name="Zhou Y."/>
            <person name="Borromeo M."/>
            <person name="Kollipara R.K."/>
            <person name="Yan J."/>
            <person name="Xie Y."/>
            <person name="Xie X.J."/>
            <person name="Whitehurst A.W."/>
        </authorList>
    </citation>
    <scope>FUNCTION</scope>
    <scope>INTERACTION WITH BIK AND RNF183</scope>
    <scope>SUBCELLULAR LOCATION</scope>
    <scope>MUTAGENESIS OF LEU-151</scope>
</reference>
<reference key="6">
    <citation type="journal article" date="2016" name="EMBO Rep.">
        <title>FATE1 antagonizes calcium- and drug-induced apoptosis by uncoupling ER and mitochondria.</title>
        <authorList>
            <person name="Doghman-Bouguerra M."/>
            <person name="Granatiero V."/>
            <person name="Sbiera S."/>
            <person name="Sbiera I."/>
            <person name="Lacas-Gervais S."/>
            <person name="Brau F."/>
            <person name="Fassnacht M."/>
            <person name="Rizzuto R."/>
            <person name="Lalli E."/>
        </authorList>
    </citation>
    <scope>SUBCELLULAR LOCATION</scope>
    <scope>INTERACTION WITH IMMT AND EMD</scope>
</reference>
<reference key="7">
    <citation type="journal article" date="2003" name="Hum. Genet.">
        <title>Mutational analysis of the human FATE gene in 144 infertile men.</title>
        <authorList>
            <person name="Olesen C."/>
            <person name="Silber J."/>
            <person name="Eiberg H."/>
            <person name="Ernst E."/>
            <person name="Petersen K."/>
            <person name="Lindenberg S."/>
            <person name="Tommerup N."/>
        </authorList>
    </citation>
    <scope>VARIANTS VAL-10; THR-34 AND ARG-125</scope>
</reference>
<accession>Q969F0</accession>
<evidence type="ECO:0000255" key="1"/>
<evidence type="ECO:0000256" key="2">
    <source>
        <dbReference type="SAM" id="MobiDB-lite"/>
    </source>
</evidence>
<evidence type="ECO:0000269" key="3">
    <source>
    </source>
</evidence>
<evidence type="ECO:0000269" key="4">
    <source>
    </source>
</evidence>
<evidence type="ECO:0000269" key="5">
    <source>
    </source>
</evidence>
<evidence type="ECO:0000269" key="6">
    <source>
    </source>
</evidence>
<evidence type="ECO:0000269" key="7">
    <source>
    </source>
</evidence>
<evidence type="ECO:0000305" key="8"/>
<evidence type="ECO:0000305" key="9">
    <source>
    </source>
</evidence>
<evidence type="ECO:0000305" key="10">
    <source>
    </source>
</evidence>
<gene>
    <name type="primary">FATE1</name>
    <name type="synonym">FATE</name>
</gene>
<comment type="function">
    <text evidence="7 9">Involved in the regulation of endoplasmic reticulum (ER)-mitochondria coupling. Negatively regulates the ER-mitochondria distance and Ca(2+) transfer from ER to mitochondria possibly implicating it in the regulation of apoptosis (PubMed:27402544). May collaborate with RNF183 to restrain BIK protein levels thus regulating apoptotic signaling (PubMed:26567849).</text>
</comment>
<comment type="subunit">
    <text evidence="6 7">Interacts with BIK and RNF183 (PubMed:26567849). Interacts with IMMT/MIC60and EMD (PubMed:27402544).</text>
</comment>
<comment type="interaction">
    <interactant intactId="EBI-743099">
        <id>Q969F0</id>
    </interactant>
    <interactant intactId="EBI-741181">
        <id>Q6RW13</id>
        <label>AGTRAP</label>
    </interactant>
    <organismsDiffer>false</organismsDiffer>
    <experiments>3</experiments>
</comment>
<comment type="interaction">
    <interactant intactId="EBI-743099">
        <id>Q969F0</id>
    </interactant>
    <interactant intactId="EBI-11522760">
        <id>Q6RW13-2</id>
        <label>AGTRAP</label>
    </interactant>
    <organismsDiffer>false</organismsDiffer>
    <experiments>3</experiments>
</comment>
<comment type="interaction">
    <interactant intactId="EBI-743099">
        <id>Q969F0</id>
    </interactant>
    <interactant intactId="EBI-11976321">
        <id>O95236-2</id>
        <label>APOL3</label>
    </interactant>
    <organismsDiffer>false</organismsDiffer>
    <experiments>3</experiments>
</comment>
<comment type="interaction">
    <interactant intactId="EBI-743099">
        <id>Q969F0</id>
    </interactant>
    <interactant intactId="EBI-10249621">
        <id>Q6FGT0</id>
        <label>AQP9</label>
    </interactant>
    <organismsDiffer>false</organismsDiffer>
    <experiments>3</experiments>
</comment>
<comment type="interaction">
    <interactant intactId="EBI-743099">
        <id>Q969F0</id>
    </interactant>
    <interactant intactId="EBI-12808270">
        <id>P07307-3</id>
        <label>ASGR2</label>
    </interactant>
    <organismsDiffer>false</organismsDiffer>
    <experiments>3</experiments>
</comment>
<comment type="interaction">
    <interactant intactId="EBI-743099">
        <id>Q969F0</id>
    </interactant>
    <interactant intactId="EBI-16432496">
        <id>A0A0S2Z5Y8</id>
        <label>ATCAY</label>
    </interactant>
    <organismsDiffer>false</organismsDiffer>
    <experiments>3</experiments>
</comment>
<comment type="interaction">
    <interactant intactId="EBI-743099">
        <id>Q969F0</id>
    </interactant>
    <interactant intactId="EBI-707714">
        <id>Q92843</id>
        <label>BCL2L2</label>
    </interactant>
    <organismsDiffer>false</organismsDiffer>
    <experiments>6</experiments>
</comment>
<comment type="interaction">
    <interactant intactId="EBI-743099">
        <id>Q969F0</id>
    </interactant>
    <interactant intactId="EBI-700794">
        <id>Q13323</id>
        <label>BIK</label>
    </interactant>
    <organismsDiffer>false</organismsDiffer>
    <experiments>8</experiments>
</comment>
<comment type="interaction">
    <interactant intactId="EBI-743099">
        <id>Q969F0</id>
    </interactant>
    <interactant intactId="EBI-752094">
        <id>Q12982</id>
        <label>BNIP2</label>
    </interactant>
    <organismsDiffer>false</organismsDiffer>
    <experiments>6</experiments>
</comment>
<comment type="interaction">
    <interactant intactId="EBI-743099">
        <id>Q969F0</id>
    </interactant>
    <interactant intactId="EBI-749464">
        <id>Q12983</id>
        <label>BNIP3</label>
    </interactant>
    <organismsDiffer>false</organismsDiffer>
    <experiments>6</experiments>
</comment>
<comment type="interaction">
    <interactant intactId="EBI-743099">
        <id>Q969F0</id>
    </interactant>
    <interactant intactId="EBI-849893">
        <id>O60238</id>
        <label>BNIP3L</label>
    </interactant>
    <organismsDiffer>false</organismsDiffer>
    <experiments>3</experiments>
</comment>
<comment type="interaction">
    <interactant intactId="EBI-743099">
        <id>Q969F0</id>
    </interactant>
    <interactant intactId="EBI-8648738">
        <id>Q8WVV5</id>
        <label>BTN2A2</label>
    </interactant>
    <organismsDiffer>false</organismsDiffer>
    <experiments>3</experiments>
</comment>
<comment type="interaction">
    <interactant intactId="EBI-743099">
        <id>Q969F0</id>
    </interactant>
    <interactant intactId="EBI-12062109">
        <id>Q86Z23</id>
        <label>C1QL4</label>
    </interactant>
    <organismsDiffer>false</organismsDiffer>
    <experiments>3</experiments>
</comment>
<comment type="interaction">
    <interactant intactId="EBI-743099">
        <id>Q969F0</id>
    </interactant>
    <interactant intactId="EBI-12187137">
        <id>Q9BXU9</id>
        <label>CALN1</label>
    </interactant>
    <organismsDiffer>false</organismsDiffer>
    <experiments>3</experiments>
</comment>
<comment type="interaction">
    <interactant intactId="EBI-743099">
        <id>Q969F0</id>
    </interactant>
    <interactant intactId="EBI-6873045">
        <id>Q6NSX1</id>
        <label>CCDC70</label>
    </interactant>
    <organismsDiffer>false</organismsDiffer>
    <experiments>7</experiments>
</comment>
<comment type="interaction">
    <interactant intactId="EBI-743099">
        <id>Q969F0</id>
    </interactant>
    <interactant intactId="EBI-7797864">
        <id>P11912</id>
        <label>CD79A</label>
    </interactant>
    <organismsDiffer>false</organismsDiffer>
    <experiments>6</experiments>
</comment>
<comment type="interaction">
    <interactant intactId="EBI-743099">
        <id>Q969F0</id>
    </interactant>
    <interactant intactId="EBI-2873723">
        <id>Q01151</id>
        <label>CD83</label>
    </interactant>
    <organismsDiffer>false</organismsDiffer>
    <experiments>3</experiments>
</comment>
<comment type="interaction">
    <interactant intactId="EBI-743099">
        <id>Q969F0</id>
    </interactant>
    <interactant intactId="EBI-295634">
        <id>Q16543</id>
        <label>CDC37</label>
    </interactant>
    <organismsDiffer>false</organismsDiffer>
    <experiments>3</experiments>
</comment>
<comment type="interaction">
    <interactant intactId="EBI-743099">
        <id>Q969F0</id>
    </interactant>
    <interactant intactId="EBI-2622997">
        <id>Q9HA82</id>
        <label>CERS4</label>
    </interactant>
    <organismsDiffer>false</organismsDiffer>
    <experiments>3</experiments>
</comment>
<comment type="interaction">
    <interactant intactId="EBI-743099">
        <id>Q969F0</id>
    </interactant>
    <interactant intactId="EBI-852194">
        <id>Q68CJ9</id>
        <label>CREB3L3</label>
    </interactant>
    <organismsDiffer>false</organismsDiffer>
    <experiments>3</experiments>
</comment>
<comment type="interaction">
    <interactant intactId="EBI-743099">
        <id>Q969F0</id>
    </interactant>
    <interactant intactId="EBI-1763264">
        <id>P15509</id>
        <label>CSF2RA</label>
    </interactant>
    <organismsDiffer>false</organismsDiffer>
    <experiments>3</experiments>
</comment>
<comment type="interaction">
    <interactant intactId="EBI-743099">
        <id>Q969F0</id>
    </interactant>
    <interactant intactId="EBI-7883667">
        <id>P40313</id>
        <label>CTRL</label>
    </interactant>
    <organismsDiffer>false</organismsDiffer>
    <experiments>3</experiments>
</comment>
<comment type="interaction">
    <interactant intactId="EBI-743099">
        <id>Q969F0</id>
    </interactant>
    <interactant intactId="EBI-3905522">
        <id>P25024</id>
        <label>CXCR1</label>
    </interactant>
    <organismsDiffer>false</organismsDiffer>
    <experiments>3</experiments>
</comment>
<comment type="interaction">
    <interactant intactId="EBI-743099">
        <id>Q969F0</id>
    </interactant>
    <interactant intactId="EBI-16432539">
        <id>P49682-3</id>
        <label>CXCR3</label>
    </interactant>
    <organismsDiffer>false</organismsDiffer>
    <experiments>3</experiments>
</comment>
<comment type="interaction">
    <interactant intactId="EBI-743099">
        <id>Q969F0</id>
    </interactant>
    <interactant intactId="EBI-747324">
        <id>Q9BTE1</id>
        <label>DCTN5</label>
    </interactant>
    <organismsDiffer>false</organismsDiffer>
    <experiments>3</experiments>
</comment>
<comment type="interaction">
    <interactant intactId="EBI-743099">
        <id>Q969F0</id>
    </interactant>
    <interactant intactId="EBI-8639143">
        <id>Q96LL9</id>
        <label>DNAJC30</label>
    </interactant>
    <organismsDiffer>false</organismsDiffer>
    <experiments>3</experiments>
</comment>
<comment type="interaction">
    <interactant intactId="EBI-743099">
        <id>Q969F0</id>
    </interactant>
    <interactant intactId="EBI-489887">
        <id>P50402</id>
        <label>EMD</label>
    </interactant>
    <organismsDiffer>false</organismsDiffer>
    <experiments>10</experiments>
</comment>
<comment type="interaction">
    <interactant intactId="EBI-743099">
        <id>Q969F0</id>
    </interactant>
    <interactant intactId="EBI-12201693">
        <id>Q8N128-2</id>
        <label>FAM177A1</label>
    </interactant>
    <organismsDiffer>false</organismsDiffer>
    <experiments>3</experiments>
</comment>
<comment type="interaction">
    <interactant intactId="EBI-743099">
        <id>Q969F0</id>
    </interactant>
    <interactant intactId="EBI-18304435">
        <id>Q5JX71</id>
        <label>FAM209A</label>
    </interactant>
    <organismsDiffer>false</organismsDiffer>
    <experiments>3</experiments>
</comment>
<comment type="interaction">
    <interactant intactId="EBI-743099">
        <id>Q969F0</id>
    </interactant>
    <interactant intactId="EBI-743099">
        <id>Q969F0</id>
        <label>FATE1</label>
    </interactant>
    <organismsDiffer>false</organismsDiffer>
    <experiments>3</experiments>
</comment>
<comment type="interaction">
    <interactant intactId="EBI-743099">
        <id>Q969F0</id>
    </interactant>
    <interactant intactId="EBI-5773072">
        <id>Q9BZ67</id>
        <label>FRMD8</label>
    </interactant>
    <organismsDiffer>false</organismsDiffer>
    <experiments>3</experiments>
</comment>
<comment type="interaction">
    <interactant intactId="EBI-743099">
        <id>Q969F0</id>
    </interactant>
    <interactant intactId="EBI-6166686">
        <id>Q96F15</id>
        <label>GIMAP5</label>
    </interactant>
    <organismsDiffer>false</organismsDiffer>
    <experiments>3</experiments>
</comment>
<comment type="interaction">
    <interactant intactId="EBI-743099">
        <id>Q969F0</id>
    </interactant>
    <interactant intactId="EBI-12204961">
        <id>Q9NU53</id>
        <label>GINM1</label>
    </interactant>
    <organismsDiffer>false</organismsDiffer>
    <experiments>3</experiments>
</comment>
<comment type="interaction">
    <interactant intactId="EBI-743099">
        <id>Q969F0</id>
    </interactant>
    <interactant intactId="EBI-4401517">
        <id>O14653</id>
        <label>GOSR2</label>
    </interactant>
    <organismsDiffer>false</organismsDiffer>
    <experiments>3</experiments>
</comment>
<comment type="interaction">
    <interactant intactId="EBI-743099">
        <id>Q969F0</id>
    </interactant>
    <interactant intactId="EBI-10178951">
        <id>O00155</id>
        <label>GPR25</label>
    </interactant>
    <organismsDiffer>false</organismsDiffer>
    <experiments>5</experiments>
</comment>
<comment type="interaction">
    <interactant intactId="EBI-743099">
        <id>Q969F0</id>
    </interactant>
    <interactant intactId="EBI-18053395">
        <id>Q7Z5P4</id>
        <label>HSD17B13</label>
    </interactant>
    <organismsDiffer>false</organismsDiffer>
    <experiments>3</experiments>
</comment>
<comment type="interaction">
    <interactant intactId="EBI-743099">
        <id>Q969F0</id>
    </interactant>
    <interactant intactId="EBI-749162">
        <id>Q9BT40</id>
        <label>INPP5K</label>
    </interactant>
    <organismsDiffer>false</organismsDiffer>
    <experiments>7</experiments>
</comment>
<comment type="interaction">
    <interactant intactId="EBI-743099">
        <id>Q969F0</id>
    </interactant>
    <interactant intactId="EBI-749265">
        <id>Q8N6L0</id>
        <label>KASH5</label>
    </interactant>
    <organismsDiffer>false</organismsDiffer>
    <experiments>6</experiments>
</comment>
<comment type="interaction">
    <interactant intactId="EBI-743099">
        <id>Q969F0</id>
    </interactant>
    <interactant intactId="EBI-10323864">
        <id>Q9ULS6</id>
        <label>KCNS2</label>
    </interactant>
    <organismsDiffer>false</organismsDiffer>
    <experiments>6</experiments>
</comment>
<comment type="interaction">
    <interactant intactId="EBI-743099">
        <id>Q969F0</id>
    </interactant>
    <interactant intactId="EBI-2805360">
        <id>Q9UIQ6</id>
        <label>LNPEP</label>
    </interactant>
    <organismsDiffer>false</organismsDiffer>
    <experiments>3</experiments>
</comment>
<comment type="interaction">
    <interactant intactId="EBI-743099">
        <id>Q969F0</id>
    </interactant>
    <interactant intactId="EBI-12133176">
        <id>Q9UIQ6-2</id>
        <label>LNPEP</label>
    </interactant>
    <organismsDiffer>false</organismsDiffer>
    <experiments>3</experiments>
</comment>
<comment type="interaction">
    <interactant intactId="EBI-743099">
        <id>Q969F0</id>
    </interactant>
    <interactant intactId="EBI-11304917">
        <id>Q8N386</id>
        <label>LRRC25</label>
    </interactant>
    <organismsDiffer>false</organismsDiffer>
    <experiments>3</experiments>
</comment>
<comment type="interaction">
    <interactant intactId="EBI-743099">
        <id>Q969F0</id>
    </interactant>
    <interactant intactId="EBI-10186753">
        <id>O60449-3</id>
        <label>LY75</label>
    </interactant>
    <organismsDiffer>false</organismsDiffer>
    <experiments>3</experiments>
</comment>
<comment type="interaction">
    <interactant intactId="EBI-743099">
        <id>Q969F0</id>
    </interactant>
    <interactant intactId="EBI-10317612">
        <id>Q9P0N8</id>
        <label>MARCHF2</label>
    </interactant>
    <organismsDiffer>false</organismsDiffer>
    <experiments>6</experiments>
</comment>
<comment type="interaction">
    <interactant intactId="EBI-743099">
        <id>Q969F0</id>
    </interactant>
    <interactant intactId="EBI-2341065">
        <id>Q86UD3</id>
        <label>MARCHF3</label>
    </interactant>
    <organismsDiffer>false</organismsDiffer>
    <experiments>3</experiments>
</comment>
<comment type="interaction">
    <interactant intactId="EBI-743099">
        <id>Q969F0</id>
    </interactant>
    <interactant intactId="EBI-2341610">
        <id>Q9NX47</id>
        <label>MARCHF5</label>
    </interactant>
    <organismsDiffer>false</organismsDiffer>
    <experiments>4</experiments>
</comment>
<comment type="interaction">
    <interactant intactId="EBI-743099">
        <id>Q969F0</id>
    </interactant>
    <interactant intactId="EBI-6875061">
        <id>Q8N4S9</id>
        <label>MARVELD2</label>
    </interactant>
    <organismsDiffer>false</organismsDiffer>
    <experiments>3</experiments>
</comment>
<comment type="interaction">
    <interactant intactId="EBI-743099">
        <id>Q969F0</id>
    </interactant>
    <interactant intactId="EBI-11956541">
        <id>Q9GZY8-5</id>
        <label>MFF</label>
    </interactant>
    <organismsDiffer>false</organismsDiffer>
    <experiments>3</experiments>
</comment>
<comment type="interaction">
    <interactant intactId="EBI-743099">
        <id>Q969F0</id>
    </interactant>
    <interactant intactId="EBI-12179105">
        <id>O75425</id>
        <label>MOSPD3</label>
    </interactant>
    <organismsDiffer>false</organismsDiffer>
    <experiments>3</experiments>
</comment>
<comment type="interaction">
    <interactant intactId="EBI-743099">
        <id>Q969F0</id>
    </interactant>
    <interactant intactId="EBI-10280401">
        <id>Q95460</id>
        <label>MR1</label>
    </interactant>
    <organismsDiffer>false</organismsDiffer>
    <experiments>3</experiments>
</comment>
<comment type="interaction">
    <interactant intactId="EBI-743099">
        <id>Q969F0</id>
    </interactant>
    <interactant intactId="EBI-12201447">
        <id>Q95460-2</id>
        <label>MR1</label>
    </interactant>
    <organismsDiffer>false</organismsDiffer>
    <experiments>3</experiments>
</comment>
<comment type="interaction">
    <interactant intactId="EBI-743099">
        <id>Q969F0</id>
    </interactant>
    <interactant intactId="EBI-1246182">
        <id>Q9NX14</id>
        <label>NDUFB11</label>
    </interactant>
    <organismsDiffer>false</organismsDiffer>
    <experiments>6</experiments>
</comment>
<comment type="interaction">
    <interactant intactId="EBI-743099">
        <id>Q969F0</id>
    </interactant>
    <interactant intactId="EBI-8637292">
        <id>Q8WWG1</id>
        <label>NRG4</label>
    </interactant>
    <organismsDiffer>false</organismsDiffer>
    <experiments>7</experiments>
</comment>
<comment type="interaction">
    <interactant intactId="EBI-743099">
        <id>Q969F0</id>
    </interactant>
    <interactant intactId="EBI-10264528">
        <id>Q8IZ57</id>
        <label>NRSN1</label>
    </interactant>
    <organismsDiffer>false</organismsDiffer>
    <experiments>3</experiments>
</comment>
<comment type="interaction">
    <interactant intactId="EBI-743099">
        <id>Q969F0</id>
    </interactant>
    <interactant intactId="EBI-7642372">
        <id>Q7RTS6</id>
        <label>OTOP2</label>
    </interactant>
    <organismsDiffer>false</organismsDiffer>
    <experiments>4</experiments>
</comment>
<comment type="interaction">
    <interactant intactId="EBI-743099">
        <id>Q969F0</id>
    </interactant>
    <interactant intactId="EBI-714599">
        <id>Q9Y237</id>
        <label>PIN4</label>
    </interactant>
    <organismsDiffer>false</organismsDiffer>
    <experiments>3</experiments>
</comment>
<comment type="interaction">
    <interactant intactId="EBI-743099">
        <id>Q969F0</id>
    </interactant>
    <interactant intactId="EBI-12257782">
        <id>Q99640-2</id>
        <label>PKMYT1</label>
    </interactant>
    <organismsDiffer>false</organismsDiffer>
    <experiments>3</experiments>
</comment>
<comment type="interaction">
    <interactant intactId="EBI-743099">
        <id>Q969F0</id>
    </interactant>
    <interactant intactId="EBI-608347">
        <id>Q04941</id>
        <label>PLP2</label>
    </interactant>
    <organismsDiffer>false</organismsDiffer>
    <experiments>3</experiments>
</comment>
<comment type="interaction">
    <interactant intactId="EBI-743099">
        <id>Q969F0</id>
    </interactant>
    <interactant intactId="EBI-10272071">
        <id>Q8TAS3</id>
        <label>PRRG2</label>
    </interactant>
    <organismsDiffer>false</organismsDiffer>
    <experiments>6</experiments>
</comment>
<comment type="interaction">
    <interactant intactId="EBI-743099">
        <id>Q969F0</id>
    </interactant>
    <interactant intactId="EBI-3232108">
        <id>Q8N0V3</id>
        <label>RBFA</label>
    </interactant>
    <organismsDiffer>false</organismsDiffer>
    <experiments>3</experiments>
</comment>
<comment type="interaction">
    <interactant intactId="EBI-743099">
        <id>Q969F0</id>
    </interactant>
    <interactant intactId="EBI-12375429">
        <id>Q7Z5B4-5</id>
        <label>RIC3</label>
    </interactant>
    <organismsDiffer>false</organismsDiffer>
    <experiments>3</experiments>
</comment>
<comment type="interaction">
    <interactant intactId="EBI-743099">
        <id>Q969F0</id>
    </interactant>
    <interactant intactId="EBI-743938">
        <id>Q96D59</id>
        <label>RNF183</label>
    </interactant>
    <organismsDiffer>false</organismsDiffer>
    <experiments>4</experiments>
</comment>
<comment type="interaction">
    <interactant intactId="EBI-743099">
        <id>Q969F0</id>
    </interactant>
    <interactant intactId="EBI-1052363">
        <id>Q9NS64</id>
        <label>RPRM</label>
    </interactant>
    <organismsDiffer>false</organismsDiffer>
    <experiments>6</experiments>
</comment>
<comment type="interaction">
    <interactant intactId="EBI-743099">
        <id>Q969F0</id>
    </interactant>
    <interactant intactId="EBI-10244780">
        <id>Q5QGT7</id>
        <label>RTP2</label>
    </interactant>
    <organismsDiffer>false</organismsDiffer>
    <experiments>3</experiments>
</comment>
<comment type="interaction">
    <interactant intactId="EBI-743099">
        <id>Q969F0</id>
    </interactant>
    <interactant intactId="EBI-2695784">
        <id>Q8TAC9</id>
        <label>SCAMP5</label>
    </interactant>
    <organismsDiffer>false</organismsDiffer>
    <experiments>3</experiments>
</comment>
<comment type="interaction">
    <interactant intactId="EBI-743099">
        <id>Q969F0</id>
    </interactant>
    <interactant intactId="EBI-8652744">
        <id>Q96IW7</id>
        <label>SEC22A</label>
    </interactant>
    <organismsDiffer>false</organismsDiffer>
    <experiments>6</experiments>
</comment>
<comment type="interaction">
    <interactant intactId="EBI-743099">
        <id>Q969F0</id>
    </interactant>
    <interactant intactId="EBI-10297029">
        <id>Q9BRL7</id>
        <label>SEC22C</label>
    </interactant>
    <organismsDiffer>false</organismsDiffer>
    <experiments>6</experiments>
</comment>
<comment type="interaction">
    <interactant intactId="EBI-743099">
        <id>Q969F0</id>
    </interactant>
    <interactant intactId="EBI-81088">
        <id>Q15436</id>
        <label>SEC23A</label>
    </interactant>
    <organismsDiffer>false</organismsDiffer>
    <experiments>3</experiments>
</comment>
<comment type="interaction">
    <interactant intactId="EBI-743099">
        <id>Q969F0</id>
    </interactant>
    <interactant intactId="EBI-742673">
        <id>Q15437</id>
        <label>SEC23B</label>
    </interactant>
    <organismsDiffer>false</organismsDiffer>
    <experiments>3</experiments>
</comment>
<comment type="interaction">
    <interactant intactId="EBI-743099">
        <id>Q969F0</id>
    </interactant>
    <interactant intactId="EBI-9978441">
        <id>Q9H2H9</id>
        <label>SLC38A1</label>
    </interactant>
    <organismsDiffer>false</organismsDiffer>
    <experiments>6</experiments>
</comment>
<comment type="interaction">
    <interactant intactId="EBI-743099">
        <id>Q969F0</id>
    </interactant>
    <interactant intactId="EBI-10290130">
        <id>Q96JW4</id>
        <label>SLC41A2</label>
    </interactant>
    <organismsDiffer>false</organismsDiffer>
    <experiments>3</experiments>
</comment>
<comment type="interaction">
    <interactant intactId="EBI-743099">
        <id>Q969F0</id>
    </interactant>
    <interactant intactId="EBI-4289564">
        <id>P30825</id>
        <label>SLC7A1</label>
    </interactant>
    <organismsDiffer>false</organismsDiffer>
    <experiments>6</experiments>
</comment>
<comment type="interaction">
    <interactant intactId="EBI-743099">
        <id>Q969F0</id>
    </interactant>
    <interactant intactId="EBI-5235586">
        <id>Q8TBB6</id>
        <label>SLC7A14</label>
    </interactant>
    <organismsDiffer>false</organismsDiffer>
    <experiments>3</experiments>
</comment>
<comment type="interaction">
    <interactant intactId="EBI-743099">
        <id>Q969F0</id>
    </interactant>
    <interactant intactId="EBI-373430">
        <id>Q96QK8</id>
        <label>SMIM14</label>
    </interactant>
    <organismsDiffer>false</organismsDiffer>
    <experiments>4</experiments>
</comment>
<comment type="interaction">
    <interactant intactId="EBI-743099">
        <id>Q969F0</id>
    </interactant>
    <interactant intactId="EBI-10244848">
        <id>Q5SQN1</id>
        <label>SNAP47</label>
    </interactant>
    <organismsDiffer>false</organismsDiffer>
    <experiments>3</experiments>
</comment>
<comment type="interaction">
    <interactant intactId="EBI-743099">
        <id>Q969F0</id>
    </interactant>
    <interactant intactId="EBI-17280858">
        <id>Q8WWF3</id>
        <label>SSMEM1</label>
    </interactant>
    <organismsDiffer>false</organismsDiffer>
    <experiments>3</experiments>
</comment>
<comment type="interaction">
    <interactant intactId="EBI-743099">
        <id>Q969F0</id>
    </interactant>
    <interactant intactId="EBI-726331">
        <id>Q9H7V2</id>
        <label>SYNDIG1</label>
    </interactant>
    <organismsDiffer>false</organismsDiffer>
    <experiments>6</experiments>
</comment>
<comment type="interaction">
    <interactant intactId="EBI-743099">
        <id>Q969F0</id>
    </interactant>
    <interactant intactId="EBI-7131783">
        <id>Q8N205</id>
        <label>SYNE4</label>
    </interactant>
    <organismsDiffer>false</organismsDiffer>
    <experiments>5</experiments>
</comment>
<comment type="interaction">
    <interactant intactId="EBI-743099">
        <id>Q969F0</id>
    </interactant>
    <interactant intactId="EBI-6269521">
        <id>O43759</id>
        <label>SYNGR1</label>
    </interactant>
    <organismsDiffer>false</organismsDiffer>
    <experiments>3</experiments>
</comment>
<comment type="interaction">
    <interactant intactId="EBI-743099">
        <id>Q969F0</id>
    </interactant>
    <interactant intactId="EBI-12187159">
        <id>O43759-2</id>
        <label>SYNGR1</label>
    </interactant>
    <organismsDiffer>false</organismsDiffer>
    <experiments>6</experiments>
</comment>
<comment type="interaction">
    <interactant intactId="EBI-743099">
        <id>Q969F0</id>
    </interactant>
    <interactant intactId="EBI-10273251">
        <id>Q8TBG9</id>
        <label>SYNPR</label>
    </interactant>
    <organismsDiffer>false</organismsDiffer>
    <experiments>3</experiments>
</comment>
<comment type="interaction">
    <interactant intactId="EBI-743099">
        <id>Q969F0</id>
    </interactant>
    <interactant intactId="EBI-6268651">
        <id>Q9NPL8</id>
        <label>TIMMDC1</label>
    </interactant>
    <organismsDiffer>false</organismsDiffer>
    <experiments>4</experiments>
</comment>
<comment type="interaction">
    <interactant intactId="EBI-743099">
        <id>Q969F0</id>
    </interactant>
    <interactant intactId="EBI-8650934">
        <id>P48230</id>
        <label>TM4SF4</label>
    </interactant>
    <organismsDiffer>false</organismsDiffer>
    <experiments>3</experiments>
</comment>
<comment type="interaction">
    <interactant intactId="EBI-743099">
        <id>Q969F0</id>
    </interactant>
    <interactant intactId="EBI-723946">
        <id>P17152</id>
        <label>TMEM11</label>
    </interactant>
    <organismsDiffer>false</organismsDiffer>
    <experiments>4</experiments>
</comment>
<comment type="interaction">
    <interactant intactId="EBI-743099">
        <id>Q969F0</id>
    </interactant>
    <interactant intactId="EBI-11724423">
        <id>Q7Z7N9</id>
        <label>TMEM179B</label>
    </interactant>
    <organismsDiffer>false</organismsDiffer>
    <experiments>3</experiments>
</comment>
<comment type="interaction">
    <interactant intactId="EBI-743099">
        <id>Q969F0</id>
    </interactant>
    <interactant intactId="EBI-11994282">
        <id>Q5SNT2-2</id>
        <label>TMEM201</label>
    </interactant>
    <organismsDiffer>false</organismsDiffer>
    <experiments>3</experiments>
</comment>
<comment type="interaction">
    <interactant intactId="EBI-743099">
        <id>Q969F0</id>
    </interactant>
    <interactant intactId="EBI-10292091">
        <id>Q96NL1</id>
        <label>TMEM74</label>
    </interactant>
    <organismsDiffer>false</organismsDiffer>
    <experiments>3</experiments>
</comment>
<comment type="interaction">
    <interactant intactId="EBI-743099">
        <id>Q969F0</id>
    </interactant>
    <interactant intactId="EBI-765817">
        <id>Q9Y228</id>
        <label>TRAF3IP3</label>
    </interactant>
    <organismsDiffer>false</organismsDiffer>
    <experiments>6</experiments>
</comment>
<comment type="interaction">
    <interactant intactId="EBI-743099">
        <id>Q969F0</id>
    </interactant>
    <interactant intactId="EBI-10180829">
        <id>Q7KZS0</id>
        <label>UBE2I</label>
    </interactant>
    <organismsDiffer>false</organismsDiffer>
    <experiments>3</experiments>
</comment>
<comment type="interaction">
    <interactant intactId="EBI-743099">
        <id>Q969F0</id>
    </interactant>
    <interactant intactId="EBI-4401271">
        <id>Q9H1C4</id>
        <label>UNC93B1</label>
    </interactant>
    <organismsDiffer>false</organismsDiffer>
    <experiments>3</experiments>
</comment>
<comment type="interaction">
    <interactant intactId="EBI-743099">
        <id>Q969F0</id>
    </interactant>
    <interactant intactId="EBI-2511991">
        <id>Q9Y2K6</id>
        <label>USP20</label>
    </interactant>
    <organismsDiffer>false</organismsDiffer>
    <experiments>6</experiments>
</comment>
<comment type="interaction">
    <interactant intactId="EBI-743099">
        <id>Q969F0</id>
    </interactant>
    <interactant intactId="EBI-903131">
        <id>Q9Y279</id>
        <label>VSIG4</label>
    </interactant>
    <organismsDiffer>false</organismsDiffer>
    <experiments>3</experiments>
</comment>
<comment type="interaction">
    <interactant intactId="EBI-743099">
        <id>Q969F0</id>
    </interactant>
    <interactant intactId="EBI-12190699">
        <id>Q6UX27-3</id>
        <label>VSTM1</label>
    </interactant>
    <organismsDiffer>false</organismsDiffer>
    <experiments>3</experiments>
</comment>
<comment type="interaction">
    <interactant intactId="EBI-743099">
        <id>Q969F0</id>
    </interactant>
    <interactant intactId="EBI-751253">
        <id>Q9BSR8</id>
        <label>YIPF4</label>
    </interactant>
    <organismsDiffer>false</organismsDiffer>
    <experiments>6</experiments>
</comment>
<comment type="interaction">
    <interactant intactId="EBI-743099">
        <id>Q969F0</id>
    </interactant>
    <interactant intactId="EBI-748373">
        <id>Q6PEW1</id>
        <label>ZCCHC12</label>
    </interactant>
    <organismsDiffer>false</organismsDiffer>
    <experiments>3</experiments>
</comment>
<comment type="interaction">
    <interactant intactId="EBI-743099">
        <id>Q969F0</id>
    </interactant>
    <interactant intactId="EBI-718439">
        <id>O95159</id>
        <label>ZFPL1</label>
    </interactant>
    <organismsDiffer>false</organismsDiffer>
    <experiments>3</experiments>
</comment>
<comment type="interaction">
    <interactant intactId="EBI-743099">
        <id>Q969F0</id>
    </interactant>
    <interactant intactId="EBI-9675698">
        <id>P14079</id>
        <label>tax</label>
    </interactant>
    <organismsDiffer>true</organismsDiffer>
    <experiments>3</experiments>
</comment>
<comment type="subcellular location">
    <subcellularLocation>
        <location evidence="6 7">Mitochondrion</location>
    </subcellularLocation>
    <subcellularLocation>
        <location evidence="7">Mitochondrion outer membrane</location>
    </subcellularLocation>
    <subcellularLocation>
        <location evidence="7">Endoplasmic reticulum membrane</location>
        <topology evidence="8">Single-pass membrane protein</topology>
        <orientation evidence="10">Cytoplasmic side</orientation>
    </subcellularLocation>
    <text evidence="7">Localized to specific membrane structures termed mitochondria-associated membranes (MAMs) which connect the endoplasmic reticulum (ER) and the mitochondria. Also associated with the outer surface of mitochondria at sites that are not in close contact with the ER.</text>
</comment>
<comment type="tissue specificity">
    <text evidence="3 5">Testis-specific in fetus (aged from 6 to 11 weeks). In adult, expressed predominantly in testis, with some expression in lung, heart, kidney, adrenal gland and whole brain (PubMed:11694338). Highly expressed in certain types of cancer tissues such as hepatocellular carcinoma, colon and gastric cancer. Weakly expressed in normal pancreas (PubMed:12865919).</text>
</comment>
<name>FATE1_HUMAN</name>
<organism>
    <name type="scientific">Homo sapiens</name>
    <name type="common">Human</name>
    <dbReference type="NCBI Taxonomy" id="9606"/>
    <lineage>
        <taxon>Eukaryota</taxon>
        <taxon>Metazoa</taxon>
        <taxon>Chordata</taxon>
        <taxon>Craniata</taxon>
        <taxon>Vertebrata</taxon>
        <taxon>Euteleostomi</taxon>
        <taxon>Mammalia</taxon>
        <taxon>Eutheria</taxon>
        <taxon>Euarchontoglires</taxon>
        <taxon>Primates</taxon>
        <taxon>Haplorrhini</taxon>
        <taxon>Catarrhini</taxon>
        <taxon>Hominidae</taxon>
        <taxon>Homo</taxon>
    </lineage>
</organism>